<organism>
    <name type="scientific">Cupriavidus metallidurans (strain ATCC 43123 / DSM 2839 / NBRC 102507 / CH34)</name>
    <name type="common">Ralstonia metallidurans</name>
    <dbReference type="NCBI Taxonomy" id="266264"/>
    <lineage>
        <taxon>Bacteria</taxon>
        <taxon>Pseudomonadati</taxon>
        <taxon>Pseudomonadota</taxon>
        <taxon>Betaproteobacteria</taxon>
        <taxon>Burkholderiales</taxon>
        <taxon>Burkholderiaceae</taxon>
        <taxon>Cupriavidus</taxon>
    </lineage>
</organism>
<sequence length="218" mass="23383">MPQAPQLHDGRRIWDISPAVSPATPVWPGDTPFQHDPAWQLDEHCPVNVGRITMSPHTGAHADAPLHYAADGAPIGAVPLDAYLGPCRVIHCIGAAPRVEPQHIAHALAGTPPRVLLRTYAQAPQGKWDSAFCAVAPETISLLARHGVRLIGIDTPSLDPETSKTMDAHHAVRDHQLAILEGIVLDEVPAGDYELIALPLRLATLDASPVRAVLRELP</sequence>
<proteinExistence type="evidence at protein level"/>
<dbReference type="EC" id="3.5.1.9" evidence="1 2 3"/>
<dbReference type="EMBL" id="CP000352">
    <property type="status" value="NOT_ANNOTATED_CDS"/>
    <property type="molecule type" value="Genomic_DNA"/>
</dbReference>
<dbReference type="SMR" id="P0C8P4"/>
<dbReference type="STRING" id="266264.Rmet_6545"/>
<dbReference type="eggNOG" id="COG1878">
    <property type="taxonomic scope" value="Bacteria"/>
</dbReference>
<dbReference type="SABIO-RK" id="P0C8P4"/>
<dbReference type="UniPathway" id="UPA00333">
    <property type="reaction ID" value="UER00454"/>
</dbReference>
<dbReference type="Proteomes" id="UP000002429">
    <property type="component" value="Chromosome"/>
</dbReference>
<dbReference type="GO" id="GO:0004061">
    <property type="term" value="F:arylformamidase activity"/>
    <property type="evidence" value="ECO:0000314"/>
    <property type="project" value="UniProtKB"/>
</dbReference>
<dbReference type="GO" id="GO:0004328">
    <property type="term" value="F:formamidase activity"/>
    <property type="evidence" value="ECO:0007669"/>
    <property type="project" value="InterPro"/>
</dbReference>
<dbReference type="GO" id="GO:0046872">
    <property type="term" value="F:metal ion binding"/>
    <property type="evidence" value="ECO:0000303"/>
    <property type="project" value="UniProtKB"/>
</dbReference>
<dbReference type="GO" id="GO:0008270">
    <property type="term" value="F:zinc ion binding"/>
    <property type="evidence" value="ECO:0007669"/>
    <property type="project" value="UniProtKB-UniRule"/>
</dbReference>
<dbReference type="GO" id="GO:0043420">
    <property type="term" value="P:anthranilate metabolic process"/>
    <property type="evidence" value="ECO:0000314"/>
    <property type="project" value="UniProtKB"/>
</dbReference>
<dbReference type="GO" id="GO:0019441">
    <property type="term" value="P:L-tryptophan catabolic process to kynurenine"/>
    <property type="evidence" value="ECO:0000314"/>
    <property type="project" value="UniProtKB"/>
</dbReference>
<dbReference type="FunFam" id="3.50.30.50:FF:000001">
    <property type="entry name" value="Kynurenine formamidase"/>
    <property type="match status" value="1"/>
</dbReference>
<dbReference type="Gene3D" id="3.50.30.50">
    <property type="entry name" value="Putative cyclase"/>
    <property type="match status" value="1"/>
</dbReference>
<dbReference type="HAMAP" id="MF_01969">
    <property type="entry name" value="KynB"/>
    <property type="match status" value="1"/>
</dbReference>
<dbReference type="InterPro" id="IPR007325">
    <property type="entry name" value="KFase/CYL"/>
</dbReference>
<dbReference type="InterPro" id="IPR037175">
    <property type="entry name" value="KFase_sf"/>
</dbReference>
<dbReference type="InterPro" id="IPR017484">
    <property type="entry name" value="Kynurenine_formamidase_bac"/>
</dbReference>
<dbReference type="NCBIfam" id="TIGR03035">
    <property type="entry name" value="trp_arylform"/>
    <property type="match status" value="1"/>
</dbReference>
<dbReference type="PANTHER" id="PTHR31118">
    <property type="entry name" value="CYCLASE-LIKE PROTEIN 2"/>
    <property type="match status" value="1"/>
</dbReference>
<dbReference type="PANTHER" id="PTHR31118:SF32">
    <property type="entry name" value="KYNURENINE FORMAMIDASE"/>
    <property type="match status" value="1"/>
</dbReference>
<dbReference type="Pfam" id="PF04199">
    <property type="entry name" value="Cyclase"/>
    <property type="match status" value="1"/>
</dbReference>
<dbReference type="SUPFAM" id="SSF102198">
    <property type="entry name" value="Putative cyclase"/>
    <property type="match status" value="1"/>
</dbReference>
<evidence type="ECO:0000255" key="1">
    <source>
        <dbReference type="HAMAP-Rule" id="MF_01969"/>
    </source>
</evidence>
<evidence type="ECO:0000269" key="2">
    <source>
    </source>
</evidence>
<evidence type="ECO:0000269" key="3">
    <source>
    </source>
</evidence>
<evidence type="ECO:0000303" key="4">
    <source>
    </source>
</evidence>
<evidence type="ECO:0000305" key="5"/>
<evidence type="ECO:0000305" key="6">
    <source>
    </source>
</evidence>
<reference key="1">
    <citation type="journal article" date="2010" name="PLoS ONE">
        <title>The complete genome sequence of Cupriavidus metallidurans strain CH34, a master survivalist in harsh and anthropogenic environments.</title>
        <authorList>
            <person name="Janssen P.J."/>
            <person name="Van Houdt R."/>
            <person name="Moors H."/>
            <person name="Monsieurs P."/>
            <person name="Morin N."/>
            <person name="Michaux A."/>
            <person name="Benotmane M.A."/>
            <person name="Leys N."/>
            <person name="Vallaeys T."/>
            <person name="Lapidus A."/>
            <person name="Monchy S."/>
            <person name="Medigue C."/>
            <person name="Taghavi S."/>
            <person name="McCorkle S."/>
            <person name="Dunn J."/>
            <person name="van der Lelie D."/>
            <person name="Mergeay M."/>
        </authorList>
    </citation>
    <scope>NUCLEOTIDE SEQUENCE [LARGE SCALE GENOMIC DNA]</scope>
    <source>
        <strain>ATCC 43123 / DSM 2839 / NBRC 102507 / CH34</strain>
    </source>
</reference>
<reference key="2">
    <citation type="journal article" date="2003" name="Chem. Biol.">
        <title>NAD biosynthesis: identification of the tryptophan to quinolinate pathway in bacteria.</title>
        <authorList>
            <person name="Kurnasov O."/>
            <person name="Goral V."/>
            <person name="Colabroy K."/>
            <person name="Gerdes S."/>
            <person name="Anantha S."/>
            <person name="Osterman A."/>
            <person name="Begley T.P."/>
        </authorList>
    </citation>
    <scope>FUNCTION</scope>
    <scope>CATALYTIC ACTIVITY</scope>
    <scope>ACTIVITY REGULATION</scope>
    <scope>BIOPHYSICOCHEMICAL PROPERTIES</scope>
    <scope>COFACTOR</scope>
    <scope>PATHWAY</scope>
    <source>
        <strain>ATCC 43123 / DSM 2839 / NBRC 102507 / CH34</strain>
    </source>
</reference>
<reference key="3">
    <citation type="journal article" date="2003" name="FEMS Microbiol. Lett.">
        <title>Aerobic tryptophan degradation pathway in bacteria: novel kynurenine formamidase.</title>
        <authorList>
            <person name="Kurnasov O."/>
            <person name="Jablonski L."/>
            <person name="Polanuyer B."/>
            <person name="Dorrestein P."/>
            <person name="Begley T."/>
            <person name="Osterman A."/>
        </authorList>
    </citation>
    <scope>FUNCTION</scope>
    <scope>CATALYTIC ACTIVITY</scope>
    <scope>ACTIVITY REGULATION</scope>
    <scope>PATHWAY</scope>
    <source>
        <strain>ATCC 43123 / DSM 2839 / NBRC 102507 / CH34</strain>
    </source>
</reference>
<accession>P0C8P4</accession>
<gene>
    <name evidence="1 4" type="primary">kynB</name>
    <name type="ordered locus">Rmet_2648</name>
</gene>
<protein>
    <recommendedName>
        <fullName evidence="1 4">Kynurenine formamidase</fullName>
        <shortName evidence="1 4">KFA</shortName>
        <shortName evidence="1 4">KFase</shortName>
        <ecNumber evidence="1 2 3">3.5.1.9</ecNumber>
    </recommendedName>
    <alternativeName>
        <fullName evidence="1">Arylformamidase</fullName>
    </alternativeName>
    <alternativeName>
        <fullName evidence="1">N-formylkynurenine formamidase</fullName>
        <shortName evidence="1">FKF</shortName>
    </alternativeName>
</protein>
<comment type="function">
    <text evidence="1 2 3">Catalyzes the hydrolysis of N-formyl-L-kynurenine to L-kynurenine, the second step in the kynurenine pathway of tryptophan degradation.</text>
</comment>
<comment type="catalytic activity">
    <reaction evidence="1 2 3">
        <text>N-formyl-L-kynurenine + H2O = L-kynurenine + formate + H(+)</text>
        <dbReference type="Rhea" id="RHEA:13009"/>
        <dbReference type="ChEBI" id="CHEBI:15377"/>
        <dbReference type="ChEBI" id="CHEBI:15378"/>
        <dbReference type="ChEBI" id="CHEBI:15740"/>
        <dbReference type="ChEBI" id="CHEBI:57959"/>
        <dbReference type="ChEBI" id="CHEBI:58629"/>
        <dbReference type="EC" id="3.5.1.9"/>
    </reaction>
</comment>
<comment type="cofactor">
    <cofactor evidence="1 6">
        <name>Zn(2+)</name>
        <dbReference type="ChEBI" id="CHEBI:29105"/>
    </cofactor>
    <text evidence="1">Binds 2 zinc ions per subunit.</text>
</comment>
<comment type="activity regulation">
    <text evidence="2 3">Inhibited by EDTA (PubMed:14592712, PubMed:14700627). Insensitive to phenylmethylsulfonyl fluoride (PMSF) (PubMed:14592712, PubMed:14700627).</text>
</comment>
<comment type="biophysicochemical properties">
    <kinetics>
        <KM evidence="3">75 uM for N-formyl-L-kynurenine</KM>
        <text evidence="3">kcat is 0.77 sec(-1) for N-formyl-L-kynurenine as substrate.</text>
    </kinetics>
    <phDependence>
        <text evidence="3">Optimum pH is 8.0.</text>
    </phDependence>
</comment>
<comment type="pathway">
    <text evidence="1 2 6">Amino-acid degradation; L-tryptophan degradation via kynurenine pathway; L-kynurenine from L-tryptophan: step 2/2.</text>
</comment>
<comment type="subunit">
    <text evidence="1">Homodimer.</text>
</comment>
<comment type="similarity">
    <text evidence="1">Belongs to the Cyclase 1 superfamily. KynB family.</text>
</comment>
<comment type="sequence caution" evidence="5">
    <conflict type="erroneous termination">
        <sequence resource="EMBL" id="CP000352"/>
    </conflict>
    <text>Truncated C-terminus.</text>
</comment>
<keyword id="KW-0378">Hydrolase</keyword>
<keyword id="KW-0479">Metal-binding</keyword>
<keyword id="KW-1185">Reference proteome</keyword>
<keyword id="KW-0823">Tryptophan catabolism</keyword>
<keyword id="KW-0862">Zinc</keyword>
<feature type="chain" id="PRO_0000362135" description="Kynurenine formamidase">
    <location>
        <begin position="1"/>
        <end position="218"/>
    </location>
</feature>
<feature type="active site" description="Proton donor/acceptor" evidence="1">
    <location>
        <position position="67"/>
    </location>
</feature>
<feature type="binding site" evidence="1">
    <location>
        <position position="27"/>
    </location>
    <ligand>
        <name>substrate</name>
    </ligand>
</feature>
<feature type="binding site" evidence="1">
    <location>
        <position position="57"/>
    </location>
    <ligand>
        <name>Zn(2+)</name>
        <dbReference type="ChEBI" id="CHEBI:29105"/>
        <label>1</label>
    </ligand>
</feature>
<feature type="binding site" evidence="1">
    <location>
        <position position="61"/>
    </location>
    <ligand>
        <name>Zn(2+)</name>
        <dbReference type="ChEBI" id="CHEBI:29105"/>
        <label>1</label>
    </ligand>
</feature>
<feature type="binding site" evidence="1">
    <location>
        <position position="63"/>
    </location>
    <ligand>
        <name>Zn(2+)</name>
        <dbReference type="ChEBI" id="CHEBI:29105"/>
        <label>1</label>
    </ligand>
</feature>
<feature type="binding site" evidence="1">
    <location>
        <position position="63"/>
    </location>
    <ligand>
        <name>Zn(2+)</name>
        <dbReference type="ChEBI" id="CHEBI:29105"/>
        <label>2</label>
    </ligand>
</feature>
<feature type="binding site" evidence="1">
    <location>
        <position position="169"/>
    </location>
    <ligand>
        <name>Zn(2+)</name>
        <dbReference type="ChEBI" id="CHEBI:29105"/>
        <label>2</label>
    </ligand>
</feature>
<feature type="binding site" evidence="1">
    <location>
        <position position="181"/>
    </location>
    <ligand>
        <name>Zn(2+)</name>
        <dbReference type="ChEBI" id="CHEBI:29105"/>
        <label>1</label>
    </ligand>
</feature>
<feature type="binding site" evidence="1">
    <location>
        <position position="181"/>
    </location>
    <ligand>
        <name>Zn(2+)</name>
        <dbReference type="ChEBI" id="CHEBI:29105"/>
        <label>2</label>
    </ligand>
</feature>
<name>KYNB_CUPMC</name>